<name>RR3_ANTAG</name>
<dbReference type="EMBL" id="AB086179">
    <property type="protein sequence ID" value="BAC55388.1"/>
    <property type="molecule type" value="Genomic_DNA"/>
</dbReference>
<dbReference type="EMBL" id="AB087471">
    <property type="protein sequence ID" value="BAC55485.1"/>
    <property type="molecule type" value="mRNA"/>
</dbReference>
<dbReference type="RefSeq" id="NP_777452.1">
    <property type="nucleotide sequence ID" value="NC_004543.1"/>
</dbReference>
<dbReference type="SMR" id="Q85CS9"/>
<dbReference type="GeneID" id="2553433"/>
<dbReference type="GO" id="GO:0009507">
    <property type="term" value="C:chloroplast"/>
    <property type="evidence" value="ECO:0007669"/>
    <property type="project" value="UniProtKB-SubCell"/>
</dbReference>
<dbReference type="GO" id="GO:0022627">
    <property type="term" value="C:cytosolic small ribosomal subunit"/>
    <property type="evidence" value="ECO:0007669"/>
    <property type="project" value="TreeGrafter"/>
</dbReference>
<dbReference type="GO" id="GO:0019843">
    <property type="term" value="F:rRNA binding"/>
    <property type="evidence" value="ECO:0007669"/>
    <property type="project" value="UniProtKB-UniRule"/>
</dbReference>
<dbReference type="GO" id="GO:0003735">
    <property type="term" value="F:structural constituent of ribosome"/>
    <property type="evidence" value="ECO:0007669"/>
    <property type="project" value="InterPro"/>
</dbReference>
<dbReference type="GO" id="GO:0006412">
    <property type="term" value="P:translation"/>
    <property type="evidence" value="ECO:0007669"/>
    <property type="project" value="UniProtKB-UniRule"/>
</dbReference>
<dbReference type="CDD" id="cd02412">
    <property type="entry name" value="KH-II_30S_S3"/>
    <property type="match status" value="1"/>
</dbReference>
<dbReference type="FunFam" id="3.30.1140.32:FF:000003">
    <property type="entry name" value="30S ribosomal protein S3, chloroplastic"/>
    <property type="match status" value="1"/>
</dbReference>
<dbReference type="Gene3D" id="3.30.300.20">
    <property type="match status" value="1"/>
</dbReference>
<dbReference type="Gene3D" id="3.30.1140.32">
    <property type="entry name" value="Ribosomal protein S3, C-terminal domain"/>
    <property type="match status" value="1"/>
</dbReference>
<dbReference type="HAMAP" id="MF_01309_B">
    <property type="entry name" value="Ribosomal_uS3_B"/>
    <property type="match status" value="1"/>
</dbReference>
<dbReference type="InterPro" id="IPR015946">
    <property type="entry name" value="KH_dom-like_a/b"/>
</dbReference>
<dbReference type="InterPro" id="IPR004044">
    <property type="entry name" value="KH_dom_type_2"/>
</dbReference>
<dbReference type="InterPro" id="IPR009019">
    <property type="entry name" value="KH_sf_prok-type"/>
</dbReference>
<dbReference type="InterPro" id="IPR036419">
    <property type="entry name" value="Ribosomal_S3_C_sf"/>
</dbReference>
<dbReference type="InterPro" id="IPR005704">
    <property type="entry name" value="Ribosomal_uS3_bac-typ"/>
</dbReference>
<dbReference type="InterPro" id="IPR001351">
    <property type="entry name" value="Ribosomal_uS3_C"/>
</dbReference>
<dbReference type="InterPro" id="IPR018280">
    <property type="entry name" value="Ribosomal_uS3_CS"/>
</dbReference>
<dbReference type="NCBIfam" id="TIGR01009">
    <property type="entry name" value="rpsC_bact"/>
    <property type="match status" value="1"/>
</dbReference>
<dbReference type="PANTHER" id="PTHR11760">
    <property type="entry name" value="30S/40S RIBOSOMAL PROTEIN S3"/>
    <property type="match status" value="1"/>
</dbReference>
<dbReference type="PANTHER" id="PTHR11760:SF19">
    <property type="entry name" value="SMALL RIBOSOMAL SUBUNIT PROTEIN US3C"/>
    <property type="match status" value="1"/>
</dbReference>
<dbReference type="Pfam" id="PF07650">
    <property type="entry name" value="KH_2"/>
    <property type="match status" value="1"/>
</dbReference>
<dbReference type="Pfam" id="PF00189">
    <property type="entry name" value="Ribosomal_S3_C"/>
    <property type="match status" value="1"/>
</dbReference>
<dbReference type="SUPFAM" id="SSF54814">
    <property type="entry name" value="Prokaryotic type KH domain (KH-domain type II)"/>
    <property type="match status" value="1"/>
</dbReference>
<dbReference type="SUPFAM" id="SSF54821">
    <property type="entry name" value="Ribosomal protein S3 C-terminal domain"/>
    <property type="match status" value="1"/>
</dbReference>
<dbReference type="PROSITE" id="PS50823">
    <property type="entry name" value="KH_TYPE_2"/>
    <property type="match status" value="1"/>
</dbReference>
<dbReference type="PROSITE" id="PS00548">
    <property type="entry name" value="RIBOSOMAL_S3"/>
    <property type="match status" value="1"/>
</dbReference>
<keyword id="KW-0150">Chloroplast</keyword>
<keyword id="KW-0934">Plastid</keyword>
<keyword id="KW-0687">Ribonucleoprotein</keyword>
<keyword id="KW-0689">Ribosomal protein</keyword>
<keyword id="KW-0691">RNA editing</keyword>
<keyword id="KW-0694">RNA-binding</keyword>
<keyword id="KW-0699">rRNA-binding</keyword>
<feature type="chain" id="PRO_0000130268" description="Small ribosomal subunit protein uS3c">
    <location>
        <begin position="1"/>
        <end position="218"/>
    </location>
</feature>
<feature type="domain" description="KH type-2">
    <location>
        <begin position="47"/>
        <end position="118"/>
    </location>
</feature>
<sequence length="218" mass="25238">MGQKINPLGFRLGVTQNHCSHWFAKPNNYYKLLEEDEKMRNCIYNYVRKHIKSSSNYGGIARIEIERKTDLIQIEIYTGFPALLVESRGRGIEELKADVQTVLNLGNRKLRMALTEVEEPYTEPNILAEYIALQLENRVAFRRTMKKAIELTRKTSVKGIKIQIAGRLNGAEIARVEWAREGRVPLQTIRAQINYCYYPAQTIYGVLGIKVWIFQTEE</sequence>
<proteinExistence type="evidence at transcript level"/>
<accession>Q85CS9</accession>
<comment type="subunit">
    <text evidence="1">Part of the 30S ribosomal subunit.</text>
</comment>
<comment type="subcellular location">
    <subcellularLocation>
        <location>Plastid</location>
        <location>Chloroplast</location>
    </subcellularLocation>
</comment>
<comment type="RNA editing">
    <location>
        <position position="151" evidence="2 3"/>
    </location>
    <location>
        <position position="186" evidence="2 3"/>
    </location>
    <location>
        <position position="190" evidence="2 3"/>
    </location>
    <location>
        <position position="200" evidence="2 3"/>
    </location>
    <location>
        <position position="201" evidence="2 3"/>
    </location>
    <location>
        <position position="214" evidence="2 3"/>
    </location>
    <text>The nonsense codons at positions 190 and 201 are modified to sense codons.</text>
</comment>
<comment type="similarity">
    <text evidence="4">Belongs to the universal ribosomal protein uS3 family.</text>
</comment>
<gene>
    <name type="primary">rps3</name>
</gene>
<protein>
    <recommendedName>
        <fullName evidence="4">Small ribosomal subunit protein uS3c</fullName>
    </recommendedName>
    <alternativeName>
        <fullName>30S ribosomal protein S3, chloroplastic</fullName>
    </alternativeName>
</protein>
<geneLocation type="chloroplast"/>
<organism>
    <name type="scientific">Anthoceros angustus</name>
    <name type="common">Hornwort</name>
    <name type="synonym">Anthoceros formosae</name>
    <dbReference type="NCBI Taxonomy" id="48387"/>
    <lineage>
        <taxon>Eukaryota</taxon>
        <taxon>Viridiplantae</taxon>
        <taxon>Streptophyta</taxon>
        <taxon>Embryophyta</taxon>
        <taxon>Anthocerotophyta</taxon>
        <taxon>Anthocerotopsida</taxon>
        <taxon>Anthocerotidae</taxon>
        <taxon>Anthocerotales</taxon>
        <taxon>Anthocerotaceae</taxon>
        <taxon>Anthoceros</taxon>
    </lineage>
</organism>
<reference key="1">
    <citation type="journal article" date="2003" name="Nucleic Acids Res.">
        <title>The complete nucleotide sequence of the hornwort (Anthoceros formosae) chloroplast genome: insight into the earliest land plants.</title>
        <authorList>
            <person name="Kugita M."/>
            <person name="Kaneko A."/>
            <person name="Yamamoto Y."/>
            <person name="Takeya Y."/>
            <person name="Matsumoto T."/>
            <person name="Yoshinaga K."/>
        </authorList>
    </citation>
    <scope>NUCLEOTIDE SEQUENCE [LARGE SCALE GENOMIC DNA]</scope>
    <scope>RNA EDITING</scope>
</reference>
<reference key="2">
    <citation type="journal article" date="2003" name="Nucleic Acids Res.">
        <title>RNA editing in hornwort chloroplasts makes more than half the genes functional.</title>
        <authorList>
            <person name="Kugita M."/>
            <person name="Yamamoto Y."/>
            <person name="Fujikawa T."/>
            <person name="Matsumoto T."/>
            <person name="Yoshinaga K."/>
        </authorList>
    </citation>
    <scope>NUCLEOTIDE SEQUENCE [MRNA]</scope>
    <scope>RNA EDITING</scope>
    <source>
        <tissue>Thallus</tissue>
    </source>
</reference>
<evidence type="ECO:0000250" key="1"/>
<evidence type="ECO:0000269" key="2">
    <source>
    </source>
</evidence>
<evidence type="ECO:0000269" key="3">
    <source>
    </source>
</evidence>
<evidence type="ECO:0000305" key="4"/>